<reference key="1">
    <citation type="journal article" date="2007" name="PLoS Genet.">
        <title>Genome analysis of Minibacterium massiliensis highlights the convergent evolution of water-living bacteria.</title>
        <authorList>
            <person name="Audic S."/>
            <person name="Robert C."/>
            <person name="Campagna B."/>
            <person name="Parinello H."/>
            <person name="Claverie J.-M."/>
            <person name="Raoult D."/>
            <person name="Drancourt M."/>
        </authorList>
    </citation>
    <scope>NUCLEOTIDE SEQUENCE [LARGE SCALE GENOMIC DNA]</scope>
    <source>
        <strain>Marseille</strain>
    </source>
</reference>
<accession>A6T376</accession>
<comment type="function">
    <text evidence="1">IGPS catalyzes the conversion of PRFAR and glutamine to IGP, AICAR and glutamate. The HisF subunit catalyzes the cyclization activity that produces IGP and AICAR from PRFAR using the ammonia provided by the HisH subunit.</text>
</comment>
<comment type="catalytic activity">
    <reaction evidence="1">
        <text>5-[(5-phospho-1-deoxy-D-ribulos-1-ylimino)methylamino]-1-(5-phospho-beta-D-ribosyl)imidazole-4-carboxamide + L-glutamine = D-erythro-1-(imidazol-4-yl)glycerol 3-phosphate + 5-amino-1-(5-phospho-beta-D-ribosyl)imidazole-4-carboxamide + L-glutamate + H(+)</text>
        <dbReference type="Rhea" id="RHEA:24793"/>
        <dbReference type="ChEBI" id="CHEBI:15378"/>
        <dbReference type="ChEBI" id="CHEBI:29985"/>
        <dbReference type="ChEBI" id="CHEBI:58278"/>
        <dbReference type="ChEBI" id="CHEBI:58359"/>
        <dbReference type="ChEBI" id="CHEBI:58475"/>
        <dbReference type="ChEBI" id="CHEBI:58525"/>
        <dbReference type="EC" id="4.3.2.10"/>
    </reaction>
</comment>
<comment type="pathway">
    <text evidence="1">Amino-acid biosynthesis; L-histidine biosynthesis; L-histidine from 5-phospho-alpha-D-ribose 1-diphosphate: step 5/9.</text>
</comment>
<comment type="subunit">
    <text evidence="1">Heterodimer of HisH and HisF.</text>
</comment>
<comment type="subcellular location">
    <subcellularLocation>
        <location evidence="1">Cytoplasm</location>
    </subcellularLocation>
</comment>
<comment type="similarity">
    <text evidence="1">Belongs to the HisA/HisF family.</text>
</comment>
<sequence length="254" mass="27008">MTLAKRIIPCLDVTAGRVVKGVNFLELRDAGDPIEIARRYDEQGADEITFLDITATSDGRDLILDIIEAVASQVFIPLTVGGGVRAVDDVRRLLNAGADKVGINSSAISNPQLVFDASQKYGSQCIVVAIDAKKASDGRWEVFTHGGRKATGLDAVEWAKKMQNLGAGEILLTSMDRDGTKIGFDLDLTRSVSDAISIPVIASGGVGGLQDLADGVKVGRADAVLAASIFHYGQHTVQEAKRFMADQGIPMRLV</sequence>
<evidence type="ECO:0000255" key="1">
    <source>
        <dbReference type="HAMAP-Rule" id="MF_01013"/>
    </source>
</evidence>
<organism>
    <name type="scientific">Janthinobacterium sp. (strain Marseille)</name>
    <name type="common">Minibacterium massiliensis</name>
    <dbReference type="NCBI Taxonomy" id="375286"/>
    <lineage>
        <taxon>Bacteria</taxon>
        <taxon>Pseudomonadati</taxon>
        <taxon>Pseudomonadota</taxon>
        <taxon>Betaproteobacteria</taxon>
        <taxon>Burkholderiales</taxon>
        <taxon>Oxalobacteraceae</taxon>
        <taxon>Janthinobacterium</taxon>
    </lineage>
</organism>
<feature type="chain" id="PRO_0000319458" description="Imidazole glycerol phosphate synthase subunit HisF">
    <location>
        <begin position="1"/>
        <end position="254"/>
    </location>
</feature>
<feature type="active site" evidence="1">
    <location>
        <position position="12"/>
    </location>
</feature>
<feature type="active site" evidence="1">
    <location>
        <position position="131"/>
    </location>
</feature>
<keyword id="KW-0028">Amino-acid biosynthesis</keyword>
<keyword id="KW-0963">Cytoplasm</keyword>
<keyword id="KW-0368">Histidine biosynthesis</keyword>
<keyword id="KW-0456">Lyase</keyword>
<protein>
    <recommendedName>
        <fullName evidence="1">Imidazole glycerol phosphate synthase subunit HisF</fullName>
        <ecNumber evidence="1">4.3.2.10</ecNumber>
    </recommendedName>
    <alternativeName>
        <fullName evidence="1">IGP synthase cyclase subunit</fullName>
    </alternativeName>
    <alternativeName>
        <fullName evidence="1">IGP synthase subunit HisF</fullName>
    </alternativeName>
    <alternativeName>
        <fullName evidence="1">ImGP synthase subunit HisF</fullName>
        <shortName evidence="1">IGPS subunit HisF</shortName>
    </alternativeName>
</protein>
<name>HIS6_JANMA</name>
<proteinExistence type="inferred from homology"/>
<gene>
    <name evidence="1" type="primary">hisF</name>
    <name type="ordered locus">mma_3283</name>
</gene>
<dbReference type="EC" id="4.3.2.10" evidence="1"/>
<dbReference type="EMBL" id="CP000269">
    <property type="protein sequence ID" value="ABR89098.1"/>
    <property type="molecule type" value="Genomic_DNA"/>
</dbReference>
<dbReference type="RefSeq" id="WP_012081126.1">
    <property type="nucleotide sequence ID" value="NC_009659.1"/>
</dbReference>
<dbReference type="SMR" id="A6T376"/>
<dbReference type="STRING" id="375286.mma_3283"/>
<dbReference type="KEGG" id="mms:mma_3283"/>
<dbReference type="eggNOG" id="COG0107">
    <property type="taxonomic scope" value="Bacteria"/>
</dbReference>
<dbReference type="HOGENOM" id="CLU_048577_4_0_4"/>
<dbReference type="OrthoDB" id="9781903at2"/>
<dbReference type="UniPathway" id="UPA00031">
    <property type="reaction ID" value="UER00010"/>
</dbReference>
<dbReference type="Proteomes" id="UP000006388">
    <property type="component" value="Chromosome"/>
</dbReference>
<dbReference type="GO" id="GO:0005737">
    <property type="term" value="C:cytoplasm"/>
    <property type="evidence" value="ECO:0007669"/>
    <property type="project" value="UniProtKB-SubCell"/>
</dbReference>
<dbReference type="GO" id="GO:0000107">
    <property type="term" value="F:imidazoleglycerol-phosphate synthase activity"/>
    <property type="evidence" value="ECO:0007669"/>
    <property type="project" value="UniProtKB-UniRule"/>
</dbReference>
<dbReference type="GO" id="GO:0016829">
    <property type="term" value="F:lyase activity"/>
    <property type="evidence" value="ECO:0007669"/>
    <property type="project" value="UniProtKB-KW"/>
</dbReference>
<dbReference type="GO" id="GO:0000105">
    <property type="term" value="P:L-histidine biosynthetic process"/>
    <property type="evidence" value="ECO:0007669"/>
    <property type="project" value="UniProtKB-UniRule"/>
</dbReference>
<dbReference type="CDD" id="cd04731">
    <property type="entry name" value="HisF"/>
    <property type="match status" value="1"/>
</dbReference>
<dbReference type="FunFam" id="3.20.20.70:FF:000006">
    <property type="entry name" value="Imidazole glycerol phosphate synthase subunit HisF"/>
    <property type="match status" value="1"/>
</dbReference>
<dbReference type="Gene3D" id="3.20.20.70">
    <property type="entry name" value="Aldolase class I"/>
    <property type="match status" value="1"/>
</dbReference>
<dbReference type="HAMAP" id="MF_01013">
    <property type="entry name" value="HisF"/>
    <property type="match status" value="1"/>
</dbReference>
<dbReference type="InterPro" id="IPR013785">
    <property type="entry name" value="Aldolase_TIM"/>
</dbReference>
<dbReference type="InterPro" id="IPR006062">
    <property type="entry name" value="His_biosynth"/>
</dbReference>
<dbReference type="InterPro" id="IPR004651">
    <property type="entry name" value="HisF"/>
</dbReference>
<dbReference type="InterPro" id="IPR050064">
    <property type="entry name" value="IGPS_HisA/HisF"/>
</dbReference>
<dbReference type="InterPro" id="IPR011060">
    <property type="entry name" value="RibuloseP-bd_barrel"/>
</dbReference>
<dbReference type="NCBIfam" id="TIGR00735">
    <property type="entry name" value="hisF"/>
    <property type="match status" value="1"/>
</dbReference>
<dbReference type="PANTHER" id="PTHR21235:SF2">
    <property type="entry name" value="IMIDAZOLE GLYCEROL PHOSPHATE SYNTHASE HISHF"/>
    <property type="match status" value="1"/>
</dbReference>
<dbReference type="PANTHER" id="PTHR21235">
    <property type="entry name" value="IMIDAZOLE GLYCEROL PHOSPHATE SYNTHASE SUBUNIT HISF/H IGP SYNTHASE SUBUNIT HISF/H"/>
    <property type="match status" value="1"/>
</dbReference>
<dbReference type="Pfam" id="PF00977">
    <property type="entry name" value="His_biosynth"/>
    <property type="match status" value="1"/>
</dbReference>
<dbReference type="SUPFAM" id="SSF51366">
    <property type="entry name" value="Ribulose-phoshate binding barrel"/>
    <property type="match status" value="1"/>
</dbReference>